<reference key="1">
    <citation type="journal article" date="2002" name="J. Bacteriol.">
        <title>Whole-genome comparison of Mycobacterium tuberculosis clinical and laboratory strains.</title>
        <authorList>
            <person name="Fleischmann R.D."/>
            <person name="Alland D."/>
            <person name="Eisen J.A."/>
            <person name="Carpenter L."/>
            <person name="White O."/>
            <person name="Peterson J.D."/>
            <person name="DeBoy R.T."/>
            <person name="Dodson R.J."/>
            <person name="Gwinn M.L."/>
            <person name="Haft D.H."/>
            <person name="Hickey E.K."/>
            <person name="Kolonay J.F."/>
            <person name="Nelson W.C."/>
            <person name="Umayam L.A."/>
            <person name="Ermolaeva M.D."/>
            <person name="Salzberg S.L."/>
            <person name="Delcher A."/>
            <person name="Utterback T.R."/>
            <person name="Weidman J.F."/>
            <person name="Khouri H.M."/>
            <person name="Gill J."/>
            <person name="Mikula A."/>
            <person name="Bishai W."/>
            <person name="Jacobs W.R. Jr."/>
            <person name="Venter J.C."/>
            <person name="Fraser C.M."/>
        </authorList>
    </citation>
    <scope>NUCLEOTIDE SEQUENCE [LARGE SCALE GENOMIC DNA]</scope>
    <source>
        <strain>CDC 1551 / Oshkosh</strain>
    </source>
</reference>
<accession>P9WM58</accession>
<accession>L0T8N9</accession>
<accession>O53457</accession>
<accession>Q7D8U5</accession>
<gene>
    <name type="ordered locus">MT1140</name>
</gene>
<proteinExistence type="inferred from homology"/>
<sequence length="212" mass="22957">MATAPYGVRLLVGAATVAVEETMKLPRTILMYPMTLASQAAHVVMRFQQGLAELVIKGDNTLETLFPPKDEKPEWATFDEDLPDALEGTSIPLLGLSDASEAKNDDRRSDGRFALYSVSDTPETTTASRSADRSTNPKTAKHPKSAAKPTVPTPAVAAELDYPALTLAQLRARLHTLDVPELEALLAYEQATKARAPFQTLLANRITRATAK</sequence>
<dbReference type="EMBL" id="AE000516">
    <property type="protein sequence ID" value="AAK45397.1"/>
    <property type="molecule type" value="Genomic_DNA"/>
</dbReference>
<dbReference type="PIR" id="C70898">
    <property type="entry name" value="C70898"/>
</dbReference>
<dbReference type="RefSeq" id="WP_003898730.1">
    <property type="nucleotide sequence ID" value="NZ_KK341227.1"/>
</dbReference>
<dbReference type="SMR" id="P9WM58"/>
<dbReference type="KEGG" id="mtc:MT1140"/>
<dbReference type="PATRIC" id="fig|83331.31.peg.1232"/>
<dbReference type="HOGENOM" id="CLU_081302_0_0_11"/>
<dbReference type="Proteomes" id="UP000001020">
    <property type="component" value="Chromosome"/>
</dbReference>
<dbReference type="InterPro" id="IPR047728">
    <property type="entry name" value="LipDrop-assoc"/>
</dbReference>
<dbReference type="NCBIfam" id="NF033649">
    <property type="entry name" value="LipDrop_Rv1109c"/>
    <property type="match status" value="1"/>
</dbReference>
<name>Y1109_MYCTO</name>
<keyword id="KW-1185">Reference proteome</keyword>
<feature type="initiator methionine" description="Removed" evidence="1">
    <location>
        <position position="1"/>
    </location>
</feature>
<feature type="chain" id="PRO_0000427361" description="Uncharacterized protein MT1140">
    <location>
        <begin position="2"/>
        <end position="212"/>
    </location>
</feature>
<feature type="region of interest" description="Disordered" evidence="2">
    <location>
        <begin position="97"/>
        <end position="151"/>
    </location>
</feature>
<feature type="compositionally biased region" description="Basic and acidic residues" evidence="2">
    <location>
        <begin position="100"/>
        <end position="111"/>
    </location>
</feature>
<organism>
    <name type="scientific">Mycobacterium tuberculosis (strain CDC 1551 / Oshkosh)</name>
    <dbReference type="NCBI Taxonomy" id="83331"/>
    <lineage>
        <taxon>Bacteria</taxon>
        <taxon>Bacillati</taxon>
        <taxon>Actinomycetota</taxon>
        <taxon>Actinomycetes</taxon>
        <taxon>Mycobacteriales</taxon>
        <taxon>Mycobacteriaceae</taxon>
        <taxon>Mycobacterium</taxon>
        <taxon>Mycobacterium tuberculosis complex</taxon>
    </lineage>
</organism>
<evidence type="ECO:0000250" key="1"/>
<evidence type="ECO:0000256" key="2">
    <source>
        <dbReference type="SAM" id="MobiDB-lite"/>
    </source>
</evidence>
<protein>
    <recommendedName>
        <fullName>Uncharacterized protein MT1140</fullName>
    </recommendedName>
</protein>